<name>RL5_MYCCT</name>
<feature type="chain" id="PRO_0000124947" description="Large ribosomal subunit protein uL5">
    <location>
        <begin position="1"/>
        <end position="180"/>
    </location>
</feature>
<feature type="sequence conflict" description="In Ref. 1; CAA29716." evidence="2" ref="1">
    <original>P</original>
    <variation>L</variation>
    <location>
        <position position="15"/>
    </location>
</feature>
<feature type="sequence conflict" description="In Ref. 1; CAA29716." evidence="2" ref="1">
    <original>T</original>
    <variation>Y</variation>
    <location>
        <position position="130"/>
    </location>
</feature>
<feature type="sequence conflict" description="In Ref. 1; CAA29716." evidence="2" ref="1">
    <original>Y</original>
    <variation>H</variation>
    <location>
        <position position="144"/>
    </location>
</feature>
<protein>
    <recommendedName>
        <fullName evidence="1">Large ribosomal subunit protein uL5</fullName>
    </recommendedName>
    <alternativeName>
        <fullName evidence="2">50S ribosomal protein L5</fullName>
    </alternativeName>
</protein>
<reference key="1">
    <citation type="journal article" date="1987" name="Mol. Gen. Genet.">
        <title>The ribosomal protein gene cluster of Mycoplasma capricolum.</title>
        <authorList>
            <person name="Ohkubo S."/>
            <person name="Muto A."/>
            <person name="Kawauchi Y."/>
            <person name="Yamao F."/>
            <person name="Osawa S."/>
        </authorList>
    </citation>
    <scope>NUCLEOTIDE SEQUENCE [GENOMIC DNA]</scope>
</reference>
<reference key="2">
    <citation type="submission" date="2005-09" db="EMBL/GenBank/DDBJ databases">
        <authorList>
            <person name="Glass J.I."/>
            <person name="Lartigue C."/>
            <person name="Pfannkoch C."/>
            <person name="Baden-Tillson H."/>
            <person name="Smith H.O."/>
            <person name="Venter J.C."/>
            <person name="Roske K."/>
            <person name="Wise K.S."/>
            <person name="Calcutt M.J."/>
            <person name="Nelson W.C."/>
            <person name="Nierman W.C."/>
        </authorList>
    </citation>
    <scope>NUCLEOTIDE SEQUENCE [LARGE SCALE GENOMIC DNA]</scope>
    <source>
        <strain>California kid / ATCC 27343 / NCTC 10154</strain>
    </source>
</reference>
<proteinExistence type="inferred from homology"/>
<sequence length="180" mass="20377">MKSRLEIKYKDQIVPELFKELNYKSIMQVPKIQKIVINMGIGDATTDPKKLDAAIFELEKLSGQKPIVTKAKKSLAVFKLREGMAIGAKVTLRGKKMYDFLDKLINVALPRVRDFRGVSKTSFDGFGNFTTGIKEQIIFPEVDYDKVIRLRGMDITIVTSAKTNKEAFALLQKIGMPFEK</sequence>
<accession>P10136</accession>
<accession>Q2SRG5</accession>
<gene>
    <name evidence="1" type="primary">rplE</name>
    <name type="ordered locus">MCAP_0684</name>
</gene>
<keyword id="KW-0687">Ribonucleoprotein</keyword>
<keyword id="KW-0689">Ribosomal protein</keyword>
<keyword id="KW-0694">RNA-binding</keyword>
<keyword id="KW-0699">rRNA-binding</keyword>
<keyword id="KW-0820">tRNA-binding</keyword>
<dbReference type="EMBL" id="X06414">
    <property type="protein sequence ID" value="CAA29716.1"/>
    <property type="molecule type" value="Genomic_DNA"/>
</dbReference>
<dbReference type="EMBL" id="CP000123">
    <property type="protein sequence ID" value="ABC01395.1"/>
    <property type="molecule type" value="Genomic_DNA"/>
</dbReference>
<dbReference type="PIR" id="S02843">
    <property type="entry name" value="R5YM5C"/>
</dbReference>
<dbReference type="RefSeq" id="WP_011387537.1">
    <property type="nucleotide sequence ID" value="NC_007633.1"/>
</dbReference>
<dbReference type="SMR" id="P10136"/>
<dbReference type="GeneID" id="23778362"/>
<dbReference type="KEGG" id="mcp:MCAP_0684"/>
<dbReference type="HOGENOM" id="CLU_061015_2_1_14"/>
<dbReference type="PhylomeDB" id="P10136"/>
<dbReference type="Proteomes" id="UP000001928">
    <property type="component" value="Chromosome"/>
</dbReference>
<dbReference type="GO" id="GO:1990904">
    <property type="term" value="C:ribonucleoprotein complex"/>
    <property type="evidence" value="ECO:0007669"/>
    <property type="project" value="UniProtKB-KW"/>
</dbReference>
<dbReference type="GO" id="GO:0005840">
    <property type="term" value="C:ribosome"/>
    <property type="evidence" value="ECO:0007669"/>
    <property type="project" value="UniProtKB-KW"/>
</dbReference>
<dbReference type="GO" id="GO:0019843">
    <property type="term" value="F:rRNA binding"/>
    <property type="evidence" value="ECO:0007669"/>
    <property type="project" value="UniProtKB-UniRule"/>
</dbReference>
<dbReference type="GO" id="GO:0003735">
    <property type="term" value="F:structural constituent of ribosome"/>
    <property type="evidence" value="ECO:0007669"/>
    <property type="project" value="InterPro"/>
</dbReference>
<dbReference type="GO" id="GO:0000049">
    <property type="term" value="F:tRNA binding"/>
    <property type="evidence" value="ECO:0007669"/>
    <property type="project" value="UniProtKB-UniRule"/>
</dbReference>
<dbReference type="GO" id="GO:0006412">
    <property type="term" value="P:translation"/>
    <property type="evidence" value="ECO:0007669"/>
    <property type="project" value="UniProtKB-UniRule"/>
</dbReference>
<dbReference type="FunFam" id="3.30.1440.10:FF:000001">
    <property type="entry name" value="50S ribosomal protein L5"/>
    <property type="match status" value="1"/>
</dbReference>
<dbReference type="Gene3D" id="3.30.1440.10">
    <property type="match status" value="1"/>
</dbReference>
<dbReference type="HAMAP" id="MF_01333_B">
    <property type="entry name" value="Ribosomal_uL5_B"/>
    <property type="match status" value="1"/>
</dbReference>
<dbReference type="InterPro" id="IPR002132">
    <property type="entry name" value="Ribosomal_uL5"/>
</dbReference>
<dbReference type="InterPro" id="IPR020930">
    <property type="entry name" value="Ribosomal_uL5_bac-type"/>
</dbReference>
<dbReference type="InterPro" id="IPR031309">
    <property type="entry name" value="Ribosomal_uL5_C"/>
</dbReference>
<dbReference type="InterPro" id="IPR020929">
    <property type="entry name" value="Ribosomal_uL5_CS"/>
</dbReference>
<dbReference type="InterPro" id="IPR022803">
    <property type="entry name" value="Ribosomal_uL5_dom_sf"/>
</dbReference>
<dbReference type="InterPro" id="IPR031310">
    <property type="entry name" value="Ribosomal_uL5_N"/>
</dbReference>
<dbReference type="NCBIfam" id="NF000585">
    <property type="entry name" value="PRK00010.1"/>
    <property type="match status" value="1"/>
</dbReference>
<dbReference type="PANTHER" id="PTHR11994">
    <property type="entry name" value="60S RIBOSOMAL PROTEIN L11-RELATED"/>
    <property type="match status" value="1"/>
</dbReference>
<dbReference type="Pfam" id="PF00281">
    <property type="entry name" value="Ribosomal_L5"/>
    <property type="match status" value="1"/>
</dbReference>
<dbReference type="Pfam" id="PF00673">
    <property type="entry name" value="Ribosomal_L5_C"/>
    <property type="match status" value="1"/>
</dbReference>
<dbReference type="PIRSF" id="PIRSF002161">
    <property type="entry name" value="Ribosomal_L5"/>
    <property type="match status" value="1"/>
</dbReference>
<dbReference type="SUPFAM" id="SSF55282">
    <property type="entry name" value="RL5-like"/>
    <property type="match status" value="1"/>
</dbReference>
<dbReference type="PROSITE" id="PS00358">
    <property type="entry name" value="RIBOSOMAL_L5"/>
    <property type="match status" value="1"/>
</dbReference>
<comment type="function">
    <text evidence="1">This is one of the proteins that bind and probably mediate the attachment of the 5S RNA into the large ribosomal subunit, where it forms part of the central protuberance. In the 70S ribosome it contacts protein S13 of the 30S subunit (bridge B1b), connecting the 2 subunits; this bridge is implicated in subunit movement. Contacts the P site tRNA; the 5S rRNA and some of its associated proteins might help stabilize positioning of ribosome-bound tRNAs.</text>
</comment>
<comment type="subunit">
    <text evidence="1">Part of the 50S ribosomal subunit; part of the 5S rRNA/L5/L18/L25 subcomplex. Contacts the 5S rRNA and the P site tRNA. Forms a bridge to the 30S subunit in the 70S ribosome.</text>
</comment>
<comment type="similarity">
    <text evidence="1">Belongs to the universal ribosomal protein uL5 family.</text>
</comment>
<organism>
    <name type="scientific">Mycoplasma capricolum subsp. capricolum (strain California kid / ATCC 27343 / NCTC 10154)</name>
    <dbReference type="NCBI Taxonomy" id="340047"/>
    <lineage>
        <taxon>Bacteria</taxon>
        <taxon>Bacillati</taxon>
        <taxon>Mycoplasmatota</taxon>
        <taxon>Mollicutes</taxon>
        <taxon>Mycoplasmataceae</taxon>
        <taxon>Mycoplasma</taxon>
    </lineage>
</organism>
<evidence type="ECO:0000255" key="1">
    <source>
        <dbReference type="HAMAP-Rule" id="MF_01333"/>
    </source>
</evidence>
<evidence type="ECO:0000305" key="2"/>